<feature type="chain" id="PRO_0000137619" description="GTP-dependent dephospho-CoA kinase">
    <location>
        <begin position="1"/>
        <end position="179"/>
    </location>
</feature>
<feature type="binding site" evidence="1">
    <location>
        <position position="55"/>
    </location>
    <ligand>
        <name>GTP</name>
        <dbReference type="ChEBI" id="CHEBI:37565"/>
    </ligand>
</feature>
<feature type="binding site" evidence="1">
    <location>
        <position position="57"/>
    </location>
    <ligand>
        <name>GTP</name>
        <dbReference type="ChEBI" id="CHEBI:37565"/>
    </ligand>
</feature>
<feature type="binding site" evidence="1">
    <location>
        <position position="74"/>
    </location>
    <ligand>
        <name>GTP</name>
        <dbReference type="ChEBI" id="CHEBI:37565"/>
    </ligand>
</feature>
<feature type="binding site" evidence="1">
    <location>
        <position position="76"/>
    </location>
    <ligand>
        <name>GTP</name>
        <dbReference type="ChEBI" id="CHEBI:37565"/>
    </ligand>
</feature>
<feature type="binding site" evidence="1">
    <location>
        <position position="128"/>
    </location>
    <ligand>
        <name>GTP</name>
        <dbReference type="ChEBI" id="CHEBI:37565"/>
    </ligand>
</feature>
<keyword id="KW-0173">Coenzyme A biosynthesis</keyword>
<keyword id="KW-0342">GTP-binding</keyword>
<keyword id="KW-0418">Kinase</keyword>
<keyword id="KW-0547">Nucleotide-binding</keyword>
<keyword id="KW-1185">Reference proteome</keyword>
<keyword id="KW-0808">Transferase</keyword>
<accession>Q980A1</accession>
<comment type="function">
    <text evidence="1">Catalyzes the GTP-dependent phosphorylation of the 3'-hydroxyl group of dephosphocoenzyme A to form coenzyme A (CoA).</text>
</comment>
<comment type="catalytic activity">
    <reaction evidence="1">
        <text>3'-dephospho-CoA + GTP = GDP + CoA + H(+)</text>
        <dbReference type="Rhea" id="RHEA:61156"/>
        <dbReference type="ChEBI" id="CHEBI:15378"/>
        <dbReference type="ChEBI" id="CHEBI:37565"/>
        <dbReference type="ChEBI" id="CHEBI:57287"/>
        <dbReference type="ChEBI" id="CHEBI:57328"/>
        <dbReference type="ChEBI" id="CHEBI:58189"/>
        <dbReference type="EC" id="2.7.1.237"/>
    </reaction>
</comment>
<comment type="pathway">
    <text evidence="1">Cofactor biosynthesis; coenzyme A biosynthesis.</text>
</comment>
<comment type="similarity">
    <text evidence="1">Belongs to the GTP-dependent DPCK family.</text>
</comment>
<proteinExistence type="inferred from homology"/>
<reference key="1">
    <citation type="journal article" date="2001" name="Proc. Natl. Acad. Sci. U.S.A.">
        <title>The complete genome of the crenarchaeon Sulfolobus solfataricus P2.</title>
        <authorList>
            <person name="She Q."/>
            <person name="Singh R.K."/>
            <person name="Confalonieri F."/>
            <person name="Zivanovic Y."/>
            <person name="Allard G."/>
            <person name="Awayez M.J."/>
            <person name="Chan-Weiher C.C.-Y."/>
            <person name="Clausen I.G."/>
            <person name="Curtis B.A."/>
            <person name="De Moors A."/>
            <person name="Erauso G."/>
            <person name="Fletcher C."/>
            <person name="Gordon P.M.K."/>
            <person name="Heikamp-de Jong I."/>
            <person name="Jeffries A.C."/>
            <person name="Kozera C.J."/>
            <person name="Medina N."/>
            <person name="Peng X."/>
            <person name="Thi-Ngoc H.P."/>
            <person name="Redder P."/>
            <person name="Schenk M.E."/>
            <person name="Theriault C."/>
            <person name="Tolstrup N."/>
            <person name="Charlebois R.L."/>
            <person name="Doolittle W.F."/>
            <person name="Duguet M."/>
            <person name="Gaasterland T."/>
            <person name="Garrett R.A."/>
            <person name="Ragan M.A."/>
            <person name="Sensen C.W."/>
            <person name="Van der Oost J."/>
        </authorList>
    </citation>
    <scope>NUCLEOTIDE SEQUENCE [LARGE SCALE GENOMIC DNA]</scope>
    <source>
        <strain>ATCC 35092 / DSM 1617 / JCM 11322 / P2</strain>
    </source>
</reference>
<evidence type="ECO:0000255" key="1">
    <source>
        <dbReference type="HAMAP-Rule" id="MF_00590"/>
    </source>
</evidence>
<dbReference type="EC" id="2.7.1.237" evidence="1"/>
<dbReference type="EMBL" id="AE006641">
    <property type="protein sequence ID" value="AAK40744.1"/>
    <property type="molecule type" value="Genomic_DNA"/>
</dbReference>
<dbReference type="PIR" id="A90186">
    <property type="entry name" value="A90186"/>
</dbReference>
<dbReference type="RefSeq" id="WP_009988765.1">
    <property type="nucleotide sequence ID" value="NC_002754.1"/>
</dbReference>
<dbReference type="SMR" id="Q980A1"/>
<dbReference type="FunCoup" id="Q980A1">
    <property type="interactions" value="11"/>
</dbReference>
<dbReference type="STRING" id="273057.SSO0416"/>
<dbReference type="PaxDb" id="273057-SSO0416"/>
<dbReference type="EnsemblBacteria" id="AAK40744">
    <property type="protein sequence ID" value="AAK40744"/>
    <property type="gene ID" value="SSO0416"/>
</dbReference>
<dbReference type="KEGG" id="sso:SSO0416"/>
<dbReference type="PATRIC" id="fig|273057.12.peg.411"/>
<dbReference type="eggNOG" id="arCOG04076">
    <property type="taxonomic scope" value="Archaea"/>
</dbReference>
<dbReference type="HOGENOM" id="CLU_120795_1_0_2"/>
<dbReference type="InParanoid" id="Q980A1"/>
<dbReference type="PhylomeDB" id="Q980A1"/>
<dbReference type="UniPathway" id="UPA00241"/>
<dbReference type="Proteomes" id="UP000001974">
    <property type="component" value="Chromosome"/>
</dbReference>
<dbReference type="GO" id="GO:0005525">
    <property type="term" value="F:GTP binding"/>
    <property type="evidence" value="ECO:0007669"/>
    <property type="project" value="UniProtKB-UniRule"/>
</dbReference>
<dbReference type="GO" id="GO:0016301">
    <property type="term" value="F:kinase activity"/>
    <property type="evidence" value="ECO:0007669"/>
    <property type="project" value="UniProtKB-UniRule"/>
</dbReference>
<dbReference type="GO" id="GO:0015937">
    <property type="term" value="P:coenzyme A biosynthetic process"/>
    <property type="evidence" value="ECO:0007669"/>
    <property type="project" value="UniProtKB-UniRule"/>
</dbReference>
<dbReference type="HAMAP" id="MF_00590">
    <property type="entry name" value="Dephospho_CoA_kinase_GTP_dep"/>
    <property type="match status" value="1"/>
</dbReference>
<dbReference type="InterPro" id="IPR007164">
    <property type="entry name" value="GTP-dep_dephospho-CoA_kin"/>
</dbReference>
<dbReference type="PANTHER" id="PTHR40732:SF1">
    <property type="entry name" value="GTP-DEPENDENT DEPHOSPHO-COA KINASE"/>
    <property type="match status" value="1"/>
</dbReference>
<dbReference type="PANTHER" id="PTHR40732">
    <property type="entry name" value="UPF0218 PROTEIN TK1697"/>
    <property type="match status" value="1"/>
</dbReference>
<dbReference type="Pfam" id="PF04019">
    <property type="entry name" value="DUF359"/>
    <property type="match status" value="1"/>
</dbReference>
<dbReference type="PIRSF" id="PIRSF006533">
    <property type="entry name" value="UCP006533"/>
    <property type="match status" value="1"/>
</dbReference>
<organism>
    <name type="scientific">Saccharolobus solfataricus (strain ATCC 35092 / DSM 1617 / JCM 11322 / P2)</name>
    <name type="common">Sulfolobus solfataricus</name>
    <dbReference type="NCBI Taxonomy" id="273057"/>
    <lineage>
        <taxon>Archaea</taxon>
        <taxon>Thermoproteota</taxon>
        <taxon>Thermoprotei</taxon>
        <taxon>Sulfolobales</taxon>
        <taxon>Sulfolobaceae</taxon>
        <taxon>Saccharolobus</taxon>
    </lineage>
</organism>
<name>DPCKG_SACS2</name>
<protein>
    <recommendedName>
        <fullName evidence="1">GTP-dependent dephospho-CoA kinase</fullName>
        <ecNumber evidence="1">2.7.1.237</ecNumber>
    </recommendedName>
    <alternativeName>
        <fullName evidence="1">Dephospho-coenzyme A kinase</fullName>
        <shortName evidence="1">DPCK</shortName>
    </alternativeName>
</protein>
<sequence>MEVRNNNKVNLCFSFDNLRNELSRPYGILFINNKIFLEFISKSIQRGSRIITVGDYVSRVLEENGIVPFLEVIDGKTKRTITQNRAITRNKEYKVTNEAGKIRFEIFEIMENILKDREGGVVFVDGEEDLLVIPVTLSANHGDIVIYGQPNAGAVVIIVNEMIRWRVRDILEKAIVKEC</sequence>
<gene>
    <name type="ordered locus">SSO0416</name>
</gene>